<sequence length="173" mass="20054">MKSNKFSNKNKINEMITAKKVKLVDQDSVMVGVVDIEEALSRARSVNLDLVEIVHDDEYPLCKIFDYSKYRYSHKKKISDSKKKQKTIIVKELKFKLNIGDNDYNVKLNMIRGFIERGDKVKISLKFIGREILHPEVGMEIIERLIKDTSDIAKPENLPKREGNLINMILTTK</sequence>
<protein>
    <recommendedName>
        <fullName evidence="1">Translation initiation factor IF-3</fullName>
    </recommendedName>
</protein>
<name>IF3_EHRRG</name>
<organism>
    <name type="scientific">Ehrlichia ruminantium (strain Gardel)</name>
    <dbReference type="NCBI Taxonomy" id="302409"/>
    <lineage>
        <taxon>Bacteria</taxon>
        <taxon>Pseudomonadati</taxon>
        <taxon>Pseudomonadota</taxon>
        <taxon>Alphaproteobacteria</taxon>
        <taxon>Rickettsiales</taxon>
        <taxon>Anaplasmataceae</taxon>
        <taxon>Ehrlichia</taxon>
    </lineage>
</organism>
<gene>
    <name evidence="1" type="primary">infC</name>
    <name type="ordered locus">ERGA_CDS_09330</name>
</gene>
<comment type="function">
    <text evidence="1">IF-3 binds to the 30S ribosomal subunit and shifts the equilibrium between 70S ribosomes and their 50S and 30S subunits in favor of the free subunits, thus enhancing the availability of 30S subunits on which protein synthesis initiation begins.</text>
</comment>
<comment type="subunit">
    <text evidence="1">Monomer.</text>
</comment>
<comment type="subcellular location">
    <subcellularLocation>
        <location evidence="1">Cytoplasm</location>
    </subcellularLocation>
</comment>
<comment type="similarity">
    <text evidence="1">Belongs to the IF-3 family.</text>
</comment>
<reference key="1">
    <citation type="journal article" date="2006" name="J. Bacteriol.">
        <title>Comparative genomic analysis of three strains of Ehrlichia ruminantium reveals an active process of genome size plasticity.</title>
        <authorList>
            <person name="Frutos R."/>
            <person name="Viari A."/>
            <person name="Ferraz C."/>
            <person name="Morgat A."/>
            <person name="Eychenie S."/>
            <person name="Kandassamy Y."/>
            <person name="Chantal I."/>
            <person name="Bensaid A."/>
            <person name="Coissac E."/>
            <person name="Vachiery N."/>
            <person name="Demaille J."/>
            <person name="Martinez D."/>
        </authorList>
    </citation>
    <scope>NUCLEOTIDE SEQUENCE [LARGE SCALE GENOMIC DNA]</scope>
    <source>
        <strain>Gardel</strain>
    </source>
</reference>
<keyword id="KW-0963">Cytoplasm</keyword>
<keyword id="KW-0396">Initiation factor</keyword>
<keyword id="KW-0648">Protein biosynthesis</keyword>
<proteinExistence type="inferred from homology"/>
<dbReference type="EMBL" id="CR925677">
    <property type="protein sequence ID" value="CAI28385.1"/>
    <property type="molecule type" value="Genomic_DNA"/>
</dbReference>
<dbReference type="SMR" id="Q5FGP0"/>
<dbReference type="KEGG" id="erg:ERGA_CDS_09330"/>
<dbReference type="HOGENOM" id="CLU_054919_3_2_5"/>
<dbReference type="OrthoDB" id="9806014at2"/>
<dbReference type="Proteomes" id="UP000000533">
    <property type="component" value="Chromosome"/>
</dbReference>
<dbReference type="GO" id="GO:0005829">
    <property type="term" value="C:cytosol"/>
    <property type="evidence" value="ECO:0007669"/>
    <property type="project" value="TreeGrafter"/>
</dbReference>
<dbReference type="GO" id="GO:0016020">
    <property type="term" value="C:membrane"/>
    <property type="evidence" value="ECO:0007669"/>
    <property type="project" value="TreeGrafter"/>
</dbReference>
<dbReference type="GO" id="GO:0043022">
    <property type="term" value="F:ribosome binding"/>
    <property type="evidence" value="ECO:0007669"/>
    <property type="project" value="TreeGrafter"/>
</dbReference>
<dbReference type="GO" id="GO:0003743">
    <property type="term" value="F:translation initiation factor activity"/>
    <property type="evidence" value="ECO:0007669"/>
    <property type="project" value="UniProtKB-UniRule"/>
</dbReference>
<dbReference type="GO" id="GO:0032790">
    <property type="term" value="P:ribosome disassembly"/>
    <property type="evidence" value="ECO:0007669"/>
    <property type="project" value="TreeGrafter"/>
</dbReference>
<dbReference type="FunFam" id="3.30.110.10:FF:000001">
    <property type="entry name" value="Translation initiation factor IF-3"/>
    <property type="match status" value="1"/>
</dbReference>
<dbReference type="Gene3D" id="3.30.110.10">
    <property type="entry name" value="Translation initiation factor 3 (IF-3), C-terminal domain"/>
    <property type="match status" value="1"/>
</dbReference>
<dbReference type="Gene3D" id="3.10.20.80">
    <property type="entry name" value="Translation initiation factor 3 (IF-3), N-terminal domain"/>
    <property type="match status" value="1"/>
</dbReference>
<dbReference type="HAMAP" id="MF_00080">
    <property type="entry name" value="IF_3"/>
    <property type="match status" value="1"/>
</dbReference>
<dbReference type="InterPro" id="IPR036788">
    <property type="entry name" value="T_IF-3_C_sf"/>
</dbReference>
<dbReference type="InterPro" id="IPR036787">
    <property type="entry name" value="T_IF-3_N_sf"/>
</dbReference>
<dbReference type="InterPro" id="IPR001288">
    <property type="entry name" value="Translation_initiation_fac_3"/>
</dbReference>
<dbReference type="InterPro" id="IPR019815">
    <property type="entry name" value="Translation_initiation_fac_3_C"/>
</dbReference>
<dbReference type="InterPro" id="IPR019814">
    <property type="entry name" value="Translation_initiation_fac_3_N"/>
</dbReference>
<dbReference type="NCBIfam" id="TIGR00168">
    <property type="entry name" value="infC"/>
    <property type="match status" value="1"/>
</dbReference>
<dbReference type="PANTHER" id="PTHR10938">
    <property type="entry name" value="TRANSLATION INITIATION FACTOR IF-3"/>
    <property type="match status" value="1"/>
</dbReference>
<dbReference type="PANTHER" id="PTHR10938:SF0">
    <property type="entry name" value="TRANSLATION INITIATION FACTOR IF-3, MITOCHONDRIAL"/>
    <property type="match status" value="1"/>
</dbReference>
<dbReference type="Pfam" id="PF00707">
    <property type="entry name" value="IF3_C"/>
    <property type="match status" value="1"/>
</dbReference>
<dbReference type="Pfam" id="PF05198">
    <property type="entry name" value="IF3_N"/>
    <property type="match status" value="1"/>
</dbReference>
<dbReference type="SUPFAM" id="SSF55200">
    <property type="entry name" value="Translation initiation factor IF3, C-terminal domain"/>
    <property type="match status" value="1"/>
</dbReference>
<dbReference type="SUPFAM" id="SSF54364">
    <property type="entry name" value="Translation initiation factor IF3, N-terminal domain"/>
    <property type="match status" value="1"/>
</dbReference>
<feature type="chain" id="PRO_1000057529" description="Translation initiation factor IF-3">
    <location>
        <begin position="1"/>
        <end position="173"/>
    </location>
</feature>
<accession>Q5FGP0</accession>
<evidence type="ECO:0000255" key="1">
    <source>
        <dbReference type="HAMAP-Rule" id="MF_00080"/>
    </source>
</evidence>